<proteinExistence type="inferred from homology"/>
<name>CIAO1_DROSI</name>
<reference key="1">
    <citation type="journal article" date="2007" name="Nature">
        <title>Evolution of genes and genomes on the Drosophila phylogeny.</title>
        <authorList>
            <consortium name="Drosophila 12 genomes consortium"/>
        </authorList>
    </citation>
    <scope>NUCLEOTIDE SEQUENCE [LARGE SCALE GENOMIC DNA]</scope>
</reference>
<sequence length="335" mass="37016">MGRLILEHTLQGHKGRIWGVAWHPKGNVFASCGEDKAIRIWSLTGNTWSTKTILSDGHKRTIREIRWSPCGQYLASASFDATTAIWSKSSGEFECNATLEGHENEVKSVSWSRSGGLLATCSRDKSVWIWEVAGDDEFECAAVLNPHTQDVKRVVWHPTKDVLASASYDNTIKMFAEEPIDNDWDCTATLTSHTSTVWGIDFDADGERLVSCSDDTTIKIWKAYHPGNTAGVATPEQQTVWKCVCTVSGQHSRAIYDVSWCKLTGLIATACGDDGIRIFKETSDSKPDEPTFEQITAEEGAHDQDVNSVQWNPVVAGQLISCSDDGTIKIWKVSE</sequence>
<feature type="chain" id="PRO_0000382491" description="Probable cytosolic iron-sulfur protein assembly protein Ciao1">
    <location>
        <begin position="1"/>
        <end position="335"/>
    </location>
</feature>
<feature type="repeat" description="WD 1">
    <location>
        <begin position="12"/>
        <end position="51"/>
    </location>
</feature>
<feature type="repeat" description="WD 2">
    <location>
        <begin position="57"/>
        <end position="96"/>
    </location>
</feature>
<feature type="repeat" description="WD 3">
    <location>
        <begin position="101"/>
        <end position="140"/>
    </location>
</feature>
<feature type="repeat" description="WD 4">
    <location>
        <begin position="146"/>
        <end position="185"/>
    </location>
</feature>
<feature type="repeat" description="WD 5">
    <location>
        <begin position="192"/>
        <end position="231"/>
    </location>
</feature>
<feature type="repeat" description="WD 6">
    <location>
        <begin position="250"/>
        <end position="289"/>
    </location>
</feature>
<feature type="repeat" description="WD 7">
    <location>
        <begin position="301"/>
        <end position="335"/>
    </location>
</feature>
<dbReference type="EMBL" id="CM000362">
    <property type="protein sequence ID" value="EDX07143.1"/>
    <property type="molecule type" value="Genomic_DNA"/>
</dbReference>
<dbReference type="SMR" id="B4QFZ8"/>
<dbReference type="STRING" id="7240.B4QFZ8"/>
<dbReference type="EnsemblMetazoa" id="FBtr0225561">
    <property type="protein sequence ID" value="FBpp0224053"/>
    <property type="gene ID" value="FBgn0196936"/>
</dbReference>
<dbReference type="EnsemblMetazoa" id="XM_002081522.4">
    <property type="protein sequence ID" value="XP_002081558.1"/>
    <property type="gene ID" value="LOC6734549"/>
</dbReference>
<dbReference type="GeneID" id="6734549"/>
<dbReference type="CTD" id="9391"/>
<dbReference type="HOGENOM" id="CLU_000288_57_8_1"/>
<dbReference type="OMA" id="IREIRWS"/>
<dbReference type="OrthoDB" id="284782at2759"/>
<dbReference type="PhylomeDB" id="B4QFZ8"/>
<dbReference type="Proteomes" id="UP000000304">
    <property type="component" value="Chromosome 2R"/>
</dbReference>
<dbReference type="Bgee" id="FBgn0196936">
    <property type="expression patterns" value="Expressed in embryo and 3 other cell types or tissues"/>
</dbReference>
<dbReference type="GO" id="GO:0097361">
    <property type="term" value="C:cytosolic [4Fe-4S] assembly targeting complex"/>
    <property type="evidence" value="ECO:0007669"/>
    <property type="project" value="EnsemblMetazoa"/>
</dbReference>
<dbReference type="GO" id="GO:1902695">
    <property type="term" value="C:metallochaperone complex"/>
    <property type="evidence" value="ECO:0007669"/>
    <property type="project" value="EnsemblMetazoa"/>
</dbReference>
<dbReference type="GO" id="GO:0016226">
    <property type="term" value="P:iron-sulfur cluster assembly"/>
    <property type="evidence" value="ECO:0007669"/>
    <property type="project" value="UniProtKB-UniRule"/>
</dbReference>
<dbReference type="GO" id="GO:0051604">
    <property type="term" value="P:protein maturation"/>
    <property type="evidence" value="ECO:0000250"/>
    <property type="project" value="UniProtKB"/>
</dbReference>
<dbReference type="CDD" id="cd00200">
    <property type="entry name" value="WD40"/>
    <property type="match status" value="1"/>
</dbReference>
<dbReference type="FunFam" id="2.130.10.10:FF:000136">
    <property type="entry name" value="Probable cytosolic iron-sulfur protein assembly protein CIAO1"/>
    <property type="match status" value="1"/>
</dbReference>
<dbReference type="Gene3D" id="2.130.10.10">
    <property type="entry name" value="YVTN repeat-like/Quinoprotein amine dehydrogenase"/>
    <property type="match status" value="1"/>
</dbReference>
<dbReference type="HAMAP" id="MF_03037">
    <property type="entry name" value="ciao1"/>
    <property type="match status" value="1"/>
</dbReference>
<dbReference type="InterPro" id="IPR028608">
    <property type="entry name" value="CIAO1/Cia1"/>
</dbReference>
<dbReference type="InterPro" id="IPR020472">
    <property type="entry name" value="G-protein_beta_WD-40_rep"/>
</dbReference>
<dbReference type="InterPro" id="IPR015943">
    <property type="entry name" value="WD40/YVTN_repeat-like_dom_sf"/>
</dbReference>
<dbReference type="InterPro" id="IPR019775">
    <property type="entry name" value="WD40_repeat_CS"/>
</dbReference>
<dbReference type="InterPro" id="IPR036322">
    <property type="entry name" value="WD40_repeat_dom_sf"/>
</dbReference>
<dbReference type="InterPro" id="IPR001680">
    <property type="entry name" value="WD40_rpt"/>
</dbReference>
<dbReference type="PANTHER" id="PTHR19920:SF0">
    <property type="entry name" value="CYTOSOLIC IRON-SULFUR PROTEIN ASSEMBLY PROTEIN CIAO1-RELATED"/>
    <property type="match status" value="1"/>
</dbReference>
<dbReference type="PANTHER" id="PTHR19920">
    <property type="entry name" value="WD40 PROTEIN CIAO1"/>
    <property type="match status" value="1"/>
</dbReference>
<dbReference type="Pfam" id="PF00400">
    <property type="entry name" value="WD40"/>
    <property type="match status" value="7"/>
</dbReference>
<dbReference type="PRINTS" id="PR00320">
    <property type="entry name" value="GPROTEINBRPT"/>
</dbReference>
<dbReference type="SMART" id="SM00320">
    <property type="entry name" value="WD40"/>
    <property type="match status" value="7"/>
</dbReference>
<dbReference type="SUPFAM" id="SSF50978">
    <property type="entry name" value="WD40 repeat-like"/>
    <property type="match status" value="1"/>
</dbReference>
<dbReference type="PROSITE" id="PS00678">
    <property type="entry name" value="WD_REPEATS_1"/>
    <property type="match status" value="1"/>
</dbReference>
<dbReference type="PROSITE" id="PS50082">
    <property type="entry name" value="WD_REPEATS_2"/>
    <property type="match status" value="6"/>
</dbReference>
<dbReference type="PROSITE" id="PS50294">
    <property type="entry name" value="WD_REPEATS_REGION"/>
    <property type="match status" value="1"/>
</dbReference>
<accession>B4QFZ8</accession>
<comment type="function">
    <text evidence="1">Essential component of the cytosolic iron-sulfur (Fe/S) protein assembly machinery. Required for the maturation of extramitochondrial Fe/S proteins.</text>
</comment>
<comment type="similarity">
    <text evidence="1">Belongs to the WD repeat CIA1 family.</text>
</comment>
<organism>
    <name type="scientific">Drosophila simulans</name>
    <name type="common">Fruit fly</name>
    <dbReference type="NCBI Taxonomy" id="7240"/>
    <lineage>
        <taxon>Eukaryota</taxon>
        <taxon>Metazoa</taxon>
        <taxon>Ecdysozoa</taxon>
        <taxon>Arthropoda</taxon>
        <taxon>Hexapoda</taxon>
        <taxon>Insecta</taxon>
        <taxon>Pterygota</taxon>
        <taxon>Neoptera</taxon>
        <taxon>Endopterygota</taxon>
        <taxon>Diptera</taxon>
        <taxon>Brachycera</taxon>
        <taxon>Muscomorpha</taxon>
        <taxon>Ephydroidea</taxon>
        <taxon>Drosophilidae</taxon>
        <taxon>Drosophila</taxon>
        <taxon>Sophophora</taxon>
    </lineage>
</organism>
<evidence type="ECO:0000255" key="1">
    <source>
        <dbReference type="HAMAP-Rule" id="MF_03037"/>
    </source>
</evidence>
<protein>
    <recommendedName>
        <fullName evidence="1">Probable cytosolic iron-sulfur protein assembly protein Ciao1</fullName>
    </recommendedName>
</protein>
<gene>
    <name evidence="1" type="primary">Ciao1</name>
    <name type="ORF">GD25651</name>
</gene>
<keyword id="KW-1185">Reference proteome</keyword>
<keyword id="KW-0677">Repeat</keyword>
<keyword id="KW-0853">WD repeat</keyword>